<gene>
    <name type="primary">CDC25A</name>
</gene>
<dbReference type="EC" id="3.1.3.48" evidence="1"/>
<dbReference type="EMBL" id="BC151493">
    <property type="protein sequence ID" value="AAI51494.1"/>
    <property type="molecule type" value="mRNA"/>
</dbReference>
<dbReference type="RefSeq" id="NP_001094570.1">
    <property type="nucleotide sequence ID" value="NM_001101100.2"/>
</dbReference>
<dbReference type="SMR" id="A7MBD1"/>
<dbReference type="FunCoup" id="A7MBD1">
    <property type="interactions" value="1217"/>
</dbReference>
<dbReference type="STRING" id="9913.ENSBTAP00000074123"/>
<dbReference type="PaxDb" id="9913-ENSBTAP00000012611"/>
<dbReference type="Ensembl" id="ENSBTAT00000099007.1">
    <property type="protein sequence ID" value="ENSBTAP00000098992.1"/>
    <property type="gene ID" value="ENSBTAG00000009586.7"/>
</dbReference>
<dbReference type="GeneID" id="520188"/>
<dbReference type="KEGG" id="bta:520188"/>
<dbReference type="CTD" id="993"/>
<dbReference type="VEuPathDB" id="HostDB:ENSBTAG00000009586"/>
<dbReference type="VGNC" id="VGNC:27062">
    <property type="gene designation" value="CDC25A"/>
</dbReference>
<dbReference type="eggNOG" id="KOG3772">
    <property type="taxonomic scope" value="Eukaryota"/>
</dbReference>
<dbReference type="GeneTree" id="ENSGT00940000160737"/>
<dbReference type="HOGENOM" id="CLU_014464_0_1_1"/>
<dbReference type="InParanoid" id="A7MBD1"/>
<dbReference type="OMA" id="GTKNGLH"/>
<dbReference type="OrthoDB" id="26523at2759"/>
<dbReference type="TreeFam" id="TF101056"/>
<dbReference type="Reactome" id="R-BTA-5689880">
    <property type="pathway name" value="Ub-specific processing proteases"/>
</dbReference>
<dbReference type="Reactome" id="R-BTA-69202">
    <property type="pathway name" value="Cyclin E associated events during G1/S transition"/>
</dbReference>
<dbReference type="Reactome" id="R-BTA-69273">
    <property type="pathway name" value="Cyclin A/B1/B2 associated events during G2/M transition"/>
</dbReference>
<dbReference type="Reactome" id="R-BTA-69601">
    <property type="pathway name" value="Ubiquitin Mediated Degradation of Phosphorylated Cdc25A"/>
</dbReference>
<dbReference type="Reactome" id="R-BTA-69656">
    <property type="pathway name" value="Cyclin A:Cdk2-associated events at S phase entry"/>
</dbReference>
<dbReference type="Proteomes" id="UP000009136">
    <property type="component" value="Chromosome 22"/>
</dbReference>
<dbReference type="Bgee" id="ENSBTAG00000009586">
    <property type="expression patterns" value="Expressed in conceptus and 102 other cell types or tissues"/>
</dbReference>
<dbReference type="GO" id="GO:0005737">
    <property type="term" value="C:cytoplasm"/>
    <property type="evidence" value="ECO:0000318"/>
    <property type="project" value="GO_Central"/>
</dbReference>
<dbReference type="GO" id="GO:0005634">
    <property type="term" value="C:nucleus"/>
    <property type="evidence" value="ECO:0000318"/>
    <property type="project" value="GO_Central"/>
</dbReference>
<dbReference type="GO" id="GO:0004721">
    <property type="term" value="F:phosphoprotein phosphatase activity"/>
    <property type="evidence" value="ECO:0000250"/>
    <property type="project" value="UniProtKB"/>
</dbReference>
<dbReference type="GO" id="GO:0019901">
    <property type="term" value="F:protein kinase binding"/>
    <property type="evidence" value="ECO:0007669"/>
    <property type="project" value="Ensembl"/>
</dbReference>
<dbReference type="GO" id="GO:0004725">
    <property type="term" value="F:protein tyrosine phosphatase activity"/>
    <property type="evidence" value="ECO:0000318"/>
    <property type="project" value="GO_Central"/>
</dbReference>
<dbReference type="GO" id="GO:0051087">
    <property type="term" value="F:protein-folding chaperone binding"/>
    <property type="evidence" value="ECO:0007669"/>
    <property type="project" value="Ensembl"/>
</dbReference>
<dbReference type="GO" id="GO:0051301">
    <property type="term" value="P:cell division"/>
    <property type="evidence" value="ECO:0007669"/>
    <property type="project" value="UniProtKB-KW"/>
</dbReference>
<dbReference type="GO" id="GO:0000086">
    <property type="term" value="P:G2/M transition of mitotic cell cycle"/>
    <property type="evidence" value="ECO:0000318"/>
    <property type="project" value="GO_Central"/>
</dbReference>
<dbReference type="GO" id="GO:0010971">
    <property type="term" value="P:positive regulation of G2/M transition of mitotic cell cycle"/>
    <property type="evidence" value="ECO:0000250"/>
    <property type="project" value="UniProtKB"/>
</dbReference>
<dbReference type="GO" id="GO:0110032">
    <property type="term" value="P:positive regulation of G2/MI transition of meiotic cell cycle"/>
    <property type="evidence" value="ECO:0000318"/>
    <property type="project" value="GO_Central"/>
</dbReference>
<dbReference type="GO" id="GO:0009314">
    <property type="term" value="P:response to radiation"/>
    <property type="evidence" value="ECO:0000250"/>
    <property type="project" value="UniProtKB"/>
</dbReference>
<dbReference type="CDD" id="cd01530">
    <property type="entry name" value="Cdc25"/>
    <property type="match status" value="1"/>
</dbReference>
<dbReference type="FunFam" id="3.40.250.10:FF:000004">
    <property type="entry name" value="M-phase inducer phosphatase 1 isoform X1"/>
    <property type="match status" value="1"/>
</dbReference>
<dbReference type="Gene3D" id="3.40.250.10">
    <property type="entry name" value="Rhodanese-like domain"/>
    <property type="match status" value="1"/>
</dbReference>
<dbReference type="InterPro" id="IPR000751">
    <property type="entry name" value="MPI_Phosphatase"/>
</dbReference>
<dbReference type="InterPro" id="IPR001763">
    <property type="entry name" value="Rhodanese-like_dom"/>
</dbReference>
<dbReference type="InterPro" id="IPR036873">
    <property type="entry name" value="Rhodanese-like_dom_sf"/>
</dbReference>
<dbReference type="PANTHER" id="PTHR10828:SF46">
    <property type="entry name" value="M-PHASE INDUCER PHOSPHATASE 1"/>
    <property type="match status" value="1"/>
</dbReference>
<dbReference type="PANTHER" id="PTHR10828">
    <property type="entry name" value="M-PHASE INDUCER PHOSPHATASE DUAL SPECIFICITY PHOSPHATASE CDC25"/>
    <property type="match status" value="1"/>
</dbReference>
<dbReference type="Pfam" id="PF06617">
    <property type="entry name" value="M-inducer_phosp"/>
    <property type="match status" value="1"/>
</dbReference>
<dbReference type="Pfam" id="PF00581">
    <property type="entry name" value="Rhodanese"/>
    <property type="match status" value="1"/>
</dbReference>
<dbReference type="PRINTS" id="PR00716">
    <property type="entry name" value="MPIPHPHTASE"/>
</dbReference>
<dbReference type="SMART" id="SM00450">
    <property type="entry name" value="RHOD"/>
    <property type="match status" value="1"/>
</dbReference>
<dbReference type="SUPFAM" id="SSF52821">
    <property type="entry name" value="Rhodanese/Cell cycle control phosphatase"/>
    <property type="match status" value="1"/>
</dbReference>
<dbReference type="PROSITE" id="PS50206">
    <property type="entry name" value="RHODANESE_3"/>
    <property type="match status" value="1"/>
</dbReference>
<protein>
    <recommendedName>
        <fullName>M-phase inducer phosphatase 1</fullName>
        <ecNumber evidence="1">3.1.3.48</ecNumber>
    </recommendedName>
    <alternativeName>
        <fullName>Dual specificity phosphatase Cdc25A</fullName>
    </alternativeName>
</protein>
<reference key="1">
    <citation type="submission" date="2007-07" db="EMBL/GenBank/DDBJ databases">
        <authorList>
            <consortium name="NIH - Mammalian Gene Collection (MGC) project"/>
        </authorList>
    </citation>
    <scope>NUCLEOTIDE SEQUENCE [LARGE SCALE MRNA]</scope>
    <source>
        <strain>Hereford</strain>
        <tissue>Fetal liver</tissue>
    </source>
</reference>
<name>MPIP1_BOVIN</name>
<proteinExistence type="evidence at transcript level"/>
<accession>A7MBD1</accession>
<feature type="chain" id="PRO_0000365161" description="M-phase inducer phosphatase 1">
    <location>
        <begin position="1"/>
        <end position="525"/>
    </location>
</feature>
<feature type="domain" description="Rhodanese" evidence="2">
    <location>
        <begin position="377"/>
        <end position="483"/>
    </location>
</feature>
<feature type="region of interest" description="Disordered" evidence="3">
    <location>
        <begin position="179"/>
        <end position="204"/>
    </location>
</feature>
<feature type="region of interest" description="Disordered" evidence="3">
    <location>
        <begin position="262"/>
        <end position="308"/>
    </location>
</feature>
<feature type="short sequence motif" description="Phosphodegron">
    <location>
        <begin position="73"/>
        <end position="83"/>
    </location>
</feature>
<feature type="short sequence motif" description="KEN box">
    <location>
        <begin position="140"/>
        <end position="142"/>
    </location>
</feature>
<feature type="compositionally biased region" description="Low complexity" evidence="3">
    <location>
        <begin position="294"/>
        <end position="306"/>
    </location>
</feature>
<feature type="active site" evidence="1">
    <location>
        <position position="432"/>
    </location>
</feature>
<feature type="modified residue" description="Phosphoserine; by CHEK1" evidence="1">
    <location>
        <position position="75"/>
    </location>
</feature>
<feature type="modified residue" description="Phosphoserine; by NEK11" evidence="1">
    <location>
        <position position="78"/>
    </location>
</feature>
<feature type="modified residue" description="Phosphoserine; by NEK11" evidence="1">
    <location>
        <position position="81"/>
    </location>
</feature>
<feature type="modified residue" description="Phosphoserine; by NEK11" evidence="1">
    <location>
        <position position="87"/>
    </location>
</feature>
<feature type="modified residue" description="Phosphoserine" evidence="1">
    <location>
        <position position="106"/>
    </location>
</feature>
<feature type="modified residue" description="Phosphoserine; by CHEK1 and CHEK2" evidence="1">
    <location>
        <position position="123"/>
    </location>
</feature>
<feature type="modified residue" description="Phosphoserine; by CHEK1" evidence="1">
    <location>
        <position position="177"/>
    </location>
</feature>
<feature type="modified residue" description="Phosphoserine; by CHEK1 and CHEK2" evidence="1">
    <location>
        <position position="279"/>
    </location>
</feature>
<feature type="modified residue" description="Phosphoserine; by CHEK1 and CHEK2" evidence="1">
    <location>
        <position position="293"/>
    </location>
</feature>
<feature type="modified residue" description="Phosphoserine" evidence="1">
    <location>
        <position position="322"/>
    </location>
</feature>
<feature type="modified residue" description="Phosphothreonine; by CHEK1" evidence="1">
    <location>
        <position position="508"/>
    </location>
</feature>
<feature type="modified residue" description="Phosphoserine; by PLK3" evidence="1">
    <location>
        <position position="514"/>
    </location>
</feature>
<feature type="modified residue" description="Phosphoserine; by PLK3" evidence="1">
    <location>
        <position position="520"/>
    </location>
</feature>
<evidence type="ECO:0000250" key="1">
    <source>
        <dbReference type="UniProtKB" id="P30304"/>
    </source>
</evidence>
<evidence type="ECO:0000255" key="2">
    <source>
        <dbReference type="PROSITE-ProRule" id="PRU00173"/>
    </source>
</evidence>
<evidence type="ECO:0000256" key="3">
    <source>
        <dbReference type="SAM" id="MobiDB-lite"/>
    </source>
</evidence>
<evidence type="ECO:0000305" key="4"/>
<organism>
    <name type="scientific">Bos taurus</name>
    <name type="common">Bovine</name>
    <dbReference type="NCBI Taxonomy" id="9913"/>
    <lineage>
        <taxon>Eukaryota</taxon>
        <taxon>Metazoa</taxon>
        <taxon>Chordata</taxon>
        <taxon>Craniata</taxon>
        <taxon>Vertebrata</taxon>
        <taxon>Euteleostomi</taxon>
        <taxon>Mammalia</taxon>
        <taxon>Eutheria</taxon>
        <taxon>Laurasiatheria</taxon>
        <taxon>Artiodactyla</taxon>
        <taxon>Ruminantia</taxon>
        <taxon>Pecora</taxon>
        <taxon>Bovidae</taxon>
        <taxon>Bovinae</taxon>
        <taxon>Bos</taxon>
    </lineage>
</organism>
<comment type="function">
    <text evidence="1">Tyrosine protein phosphatase which functions as a dosage-dependent inducer of mitotic progression. Directly dephosphorylates CDK1 and stimulates its kinase activity. Also dephosphorylates CDK2 in complex with cyclin-E, in vitro.</text>
</comment>
<comment type="catalytic activity">
    <reaction evidence="1">
        <text>O-phospho-L-tyrosyl-[protein] + H2O = L-tyrosyl-[protein] + phosphate</text>
        <dbReference type="Rhea" id="RHEA:10684"/>
        <dbReference type="Rhea" id="RHEA-COMP:10136"/>
        <dbReference type="Rhea" id="RHEA-COMP:20101"/>
        <dbReference type="ChEBI" id="CHEBI:15377"/>
        <dbReference type="ChEBI" id="CHEBI:43474"/>
        <dbReference type="ChEBI" id="CHEBI:46858"/>
        <dbReference type="ChEBI" id="CHEBI:61978"/>
        <dbReference type="EC" id="3.1.3.48"/>
    </reaction>
    <physiologicalReaction direction="left-to-right" evidence="1">
        <dbReference type="Rhea" id="RHEA:10685"/>
    </physiologicalReaction>
</comment>
<comment type="activity regulation">
    <text evidence="1">Stimulated by B-type cyclins. Stimulated by PIM1-mediated phosphorylation.</text>
</comment>
<comment type="subunit">
    <text evidence="1">Interacts with CCNB1/cyclin B1. Interacts with YWHAE/14-3-3 epsilon when phosphorylated. Interacts with CUL1 specifically when CUL1 is neddylated and active. Interacts with BTRC/BTRCP1 and FBXW11/BTRCP2. Interactions with CUL1, BTRC and FBXW11 are enhanced upon DNA damage (By similarity). Interacts with HSP90AB1; prevents heat shock-mediated CDC25A degradation and contributes to cell cycle progression (By similarity).</text>
</comment>
<comment type="domain">
    <text evidence="1">The phosphodegron motif mediates interaction with specific F-box proteins when phosphorylated. Putative phosphorylation sites at Ser-78 and Ser-81 appear to be essential for this interaction (By similarity).</text>
</comment>
<comment type="PTM">
    <text evidence="1">Phosphorylated by CHEK1 on Ser-75, Ser-123, Ser-177, Ser-279, Ser-293 and Thr-508 during checkpoint mediated cell cycle arrest. Also phosphorylated by CHEK2 on Ser-123, Ser-279, and Ser-293 during checkpoint mediated cell cycle arrest. Phosphorylation on Ser-177 and Thr-508 creates binding sites for YWHAE/14-3-3 epsilon which inhibits CDC25A. Phosphorylation on Ser-75, Ser-123, Ser-177, Ser-279 and Ser-293 may also promote ubiquitin-dependent proteolysis of CDC25A by the SCF complex. Phosphorylation of CDC25A at Ser-75 by CHEK1 primes it for subsequent phosphorylation at Ser-78, Ser-81 and Ser-87 by NEK11. Phosphorylation by NEK11 is required for BTRC-mediated polyubiquitination and degradation. Phosphorylation by PIM1 leads to an increase in phosphatase activity. Phosphorylated by PLK3 following DNA damage, leading to promote its ubiquitination and degradation (By similarity).</text>
</comment>
<comment type="PTM">
    <text evidence="1">Ubiquitinated by the anaphase promoting complex/cyclosome (APC/C) ubiquitin ligase complex that contains FZR1/CDH1 during G1 phase leading to its degradation by the proteasome. Ubiquitinated by a SCF complex containing BTRC and FBXW11 during S phase leading to its degradation by the proteasome. Deubiquitination by USP17L2/DUB3 leads to its stabilization (By similarity).</text>
</comment>
<comment type="similarity">
    <text evidence="4">Belongs to the MPI phosphatase family.</text>
</comment>
<sequence length="525" mass="59142">MELGPEPPHRRRLLFACSPPPAPQPVVKALFGTPAAGGLSPVTNLTVTMDQLQGLGSEYEQPIEVKNSSLQRMGSSESTDSGFCLDSPGPLDSKENLENPMRRINSLPQKLLGCSPALKRSHSDSLDHDVFQLIDQDENKENQVFEFKKPIRPASRGCLHVHGLEEGKDVFTQRQNSAPARMLSSNERDGNEPGNSIPFMPQSPVTPTLSDEDDGFMDLLDGENLKNDEETPSCMASLWTAPLVMRRTNNLGNRCKLFDSPSASCSSTIRSMLKRPDRSLEESPGGSRKRRKSVAGASPEEAASPEKPQEILHHQSLSLASSPKGTIENILDNDPRDLIGDFSKGYLFHTVAGKHQDLKYISPEIITSVLNGKFANLIKEFVIIDCRYPYEYEGGHIKGAVNLHMEEEVEEFLLKKPIVPTDGKRVIVVFHCEFSSERGPRMCRYVRERDRLGNEYPKLHYPELYVLKGGYKEFFLKCQSHCEPPSYRPMHHEDFKEDLKKFRTKSRTWAGEKSKREMYSRLKKL</sequence>
<keyword id="KW-0131">Cell cycle</keyword>
<keyword id="KW-0132">Cell division</keyword>
<keyword id="KW-0378">Hydrolase</keyword>
<keyword id="KW-0498">Mitosis</keyword>
<keyword id="KW-0597">Phosphoprotein</keyword>
<keyword id="KW-0904">Protein phosphatase</keyword>
<keyword id="KW-1185">Reference proteome</keyword>
<keyword id="KW-0832">Ubl conjugation</keyword>